<comment type="catalytic activity">
    <reaction evidence="1">
        <text>L-cysteine + L-glutamate + ATP = gamma-L-glutamyl-L-cysteine + ADP + phosphate + H(+)</text>
        <dbReference type="Rhea" id="RHEA:13285"/>
        <dbReference type="ChEBI" id="CHEBI:15378"/>
        <dbReference type="ChEBI" id="CHEBI:29985"/>
        <dbReference type="ChEBI" id="CHEBI:30616"/>
        <dbReference type="ChEBI" id="CHEBI:35235"/>
        <dbReference type="ChEBI" id="CHEBI:43474"/>
        <dbReference type="ChEBI" id="CHEBI:58173"/>
        <dbReference type="ChEBI" id="CHEBI:456216"/>
        <dbReference type="EC" id="6.3.2.2"/>
    </reaction>
</comment>
<comment type="pathway">
    <text evidence="1">Sulfur metabolism; glutathione biosynthesis; glutathione from L-cysteine and L-glutamate: step 1/2.</text>
</comment>
<comment type="similarity">
    <text evidence="1">Belongs to the glutamate--cysteine ligase type 1 family. Type 1 subfamily.</text>
</comment>
<accession>C1DJH1</accession>
<sequence length="530" mass="59161">MSELFSRRLALLGEPANQSLLRHCLHGIERECLRVDAAGELARTPHPAALGSALTHPYITTDYSEALLEFITPAETDSAATLAALERVHRFACAKLDGEYLWSPSMPCPLPAEEDIPIARYGNSHIGRLKHVYRKGLALRYGKTMQCIAGIHYNFSLPEELWPLLQRAEGDVRGVRGVRDFQSERYIALIRNFRRYSWLLMYLFGASPALDKSFLRGRPHHLQELDAETLYLPWATSLRMSDLGYHNNAQADLTPCYNDLASYTDSLRRAVSTPYAPYAAIGTQRDGEWLQLNTNVLQIENEYYSTIRPKRVTASGERPIQALVARGVQYVEVRCLDIDPFLPLGIDLDEARFLDAFLLFCALEDSPCLAAGECASCTGNFLKVVKEGRRPGLHLQRHGQPMPLAAWAGELLERLQPLAALFDRAYGGDGYEKALHAQQAKVADPELTPSARLLATLRERGESFRAFALRQSLAHAESLRARPLGEEERQAFEAEARASLAEQAELERRDTGSFDDFVAAYQASIQGDGG</sequence>
<organism>
    <name type="scientific">Azotobacter vinelandii (strain DJ / ATCC BAA-1303)</name>
    <dbReference type="NCBI Taxonomy" id="322710"/>
    <lineage>
        <taxon>Bacteria</taxon>
        <taxon>Pseudomonadati</taxon>
        <taxon>Pseudomonadota</taxon>
        <taxon>Gammaproteobacteria</taxon>
        <taxon>Pseudomonadales</taxon>
        <taxon>Pseudomonadaceae</taxon>
        <taxon>Azotobacter</taxon>
    </lineage>
</organism>
<dbReference type="EC" id="6.3.2.2" evidence="1"/>
<dbReference type="EMBL" id="CP001157">
    <property type="protein sequence ID" value="ACO76756.1"/>
    <property type="molecule type" value="Genomic_DNA"/>
</dbReference>
<dbReference type="RefSeq" id="WP_012699184.1">
    <property type="nucleotide sequence ID" value="NC_012560.1"/>
</dbReference>
<dbReference type="SMR" id="C1DJH1"/>
<dbReference type="STRING" id="322710.Avin_05020"/>
<dbReference type="EnsemblBacteria" id="ACO76756">
    <property type="protein sequence ID" value="ACO76756"/>
    <property type="gene ID" value="Avin_05020"/>
</dbReference>
<dbReference type="GeneID" id="88183926"/>
<dbReference type="KEGG" id="avn:Avin_05020"/>
<dbReference type="eggNOG" id="COG2918">
    <property type="taxonomic scope" value="Bacteria"/>
</dbReference>
<dbReference type="HOGENOM" id="CLU_020728_3_0_6"/>
<dbReference type="OrthoDB" id="9803907at2"/>
<dbReference type="UniPathway" id="UPA00142">
    <property type="reaction ID" value="UER00209"/>
</dbReference>
<dbReference type="Proteomes" id="UP000002424">
    <property type="component" value="Chromosome"/>
</dbReference>
<dbReference type="GO" id="GO:0005829">
    <property type="term" value="C:cytosol"/>
    <property type="evidence" value="ECO:0007669"/>
    <property type="project" value="TreeGrafter"/>
</dbReference>
<dbReference type="GO" id="GO:0005524">
    <property type="term" value="F:ATP binding"/>
    <property type="evidence" value="ECO:0007669"/>
    <property type="project" value="UniProtKB-KW"/>
</dbReference>
<dbReference type="GO" id="GO:0004357">
    <property type="term" value="F:glutamate-cysteine ligase activity"/>
    <property type="evidence" value="ECO:0007669"/>
    <property type="project" value="UniProtKB-UniRule"/>
</dbReference>
<dbReference type="GO" id="GO:0046872">
    <property type="term" value="F:metal ion binding"/>
    <property type="evidence" value="ECO:0007669"/>
    <property type="project" value="TreeGrafter"/>
</dbReference>
<dbReference type="GO" id="GO:0006750">
    <property type="term" value="P:glutathione biosynthetic process"/>
    <property type="evidence" value="ECO:0007669"/>
    <property type="project" value="UniProtKB-UniRule"/>
</dbReference>
<dbReference type="Gene3D" id="3.30.590.20">
    <property type="match status" value="1"/>
</dbReference>
<dbReference type="HAMAP" id="MF_00578">
    <property type="entry name" value="Glu_cys_ligase"/>
    <property type="match status" value="1"/>
</dbReference>
<dbReference type="InterPro" id="IPR014746">
    <property type="entry name" value="Gln_synth/guanido_kin_cat_dom"/>
</dbReference>
<dbReference type="InterPro" id="IPR007370">
    <property type="entry name" value="Glu_cys_ligase"/>
</dbReference>
<dbReference type="InterPro" id="IPR006334">
    <property type="entry name" value="Glut_cys_ligase"/>
</dbReference>
<dbReference type="NCBIfam" id="TIGR01434">
    <property type="entry name" value="glu_cys_ligase"/>
    <property type="match status" value="1"/>
</dbReference>
<dbReference type="PANTHER" id="PTHR38761">
    <property type="entry name" value="GLUTAMATE--CYSTEINE LIGASE"/>
    <property type="match status" value="1"/>
</dbReference>
<dbReference type="PANTHER" id="PTHR38761:SF1">
    <property type="entry name" value="GLUTAMATE--CYSTEINE LIGASE"/>
    <property type="match status" value="1"/>
</dbReference>
<dbReference type="Pfam" id="PF04262">
    <property type="entry name" value="Glu_cys_ligase"/>
    <property type="match status" value="1"/>
</dbReference>
<dbReference type="SUPFAM" id="SSF55931">
    <property type="entry name" value="Glutamine synthetase/guanido kinase"/>
    <property type="match status" value="1"/>
</dbReference>
<name>GSH1_AZOVD</name>
<gene>
    <name evidence="1" type="primary">gshA</name>
    <name type="ordered locus">Avin_05020</name>
</gene>
<reference key="1">
    <citation type="journal article" date="2009" name="J. Bacteriol.">
        <title>Genome sequence of Azotobacter vinelandii, an obligate aerobe specialized to support diverse anaerobic metabolic processes.</title>
        <authorList>
            <person name="Setubal J.C."/>
            <person name="Dos Santos P."/>
            <person name="Goldman B.S."/>
            <person name="Ertesvaag H."/>
            <person name="Espin G."/>
            <person name="Rubio L.M."/>
            <person name="Valla S."/>
            <person name="Almeida N.F."/>
            <person name="Balasubramanian D."/>
            <person name="Cromes L."/>
            <person name="Curatti L."/>
            <person name="Du Z."/>
            <person name="Godsy E."/>
            <person name="Goodner B."/>
            <person name="Hellner-Burris K."/>
            <person name="Hernandez J.A."/>
            <person name="Houmiel K."/>
            <person name="Imperial J."/>
            <person name="Kennedy C."/>
            <person name="Larson T.J."/>
            <person name="Latreille P."/>
            <person name="Ligon L.S."/>
            <person name="Lu J."/>
            <person name="Maerk M."/>
            <person name="Miller N.M."/>
            <person name="Norton S."/>
            <person name="O'Carroll I.P."/>
            <person name="Paulsen I."/>
            <person name="Raulfs E.C."/>
            <person name="Roemer R."/>
            <person name="Rosser J."/>
            <person name="Segura D."/>
            <person name="Slater S."/>
            <person name="Stricklin S.L."/>
            <person name="Studholme D.J."/>
            <person name="Sun J."/>
            <person name="Viana C.J."/>
            <person name="Wallin E."/>
            <person name="Wang B."/>
            <person name="Wheeler C."/>
            <person name="Zhu H."/>
            <person name="Dean D.R."/>
            <person name="Dixon R."/>
            <person name="Wood D."/>
        </authorList>
    </citation>
    <scope>NUCLEOTIDE SEQUENCE [LARGE SCALE GENOMIC DNA]</scope>
    <source>
        <strain>DJ / ATCC BAA-1303</strain>
    </source>
</reference>
<keyword id="KW-0067">ATP-binding</keyword>
<keyword id="KW-0317">Glutathione biosynthesis</keyword>
<keyword id="KW-0436">Ligase</keyword>
<keyword id="KW-0547">Nucleotide-binding</keyword>
<feature type="chain" id="PRO_1000212102" description="Glutamate--cysteine ligase">
    <location>
        <begin position="1"/>
        <end position="530"/>
    </location>
</feature>
<evidence type="ECO:0000255" key="1">
    <source>
        <dbReference type="HAMAP-Rule" id="MF_00578"/>
    </source>
</evidence>
<proteinExistence type="inferred from homology"/>
<protein>
    <recommendedName>
        <fullName evidence="1">Glutamate--cysteine ligase</fullName>
        <ecNumber evidence="1">6.3.2.2</ecNumber>
    </recommendedName>
    <alternativeName>
        <fullName evidence="1">Gamma-ECS</fullName>
        <shortName evidence="1">GCS</shortName>
    </alternativeName>
    <alternativeName>
        <fullName evidence="1">Gamma-glutamylcysteine synthetase</fullName>
    </alternativeName>
</protein>